<dbReference type="EC" id="5.3.1.24" evidence="1"/>
<dbReference type="EMBL" id="AE014291">
    <property type="protein sequence ID" value="AAN31001.1"/>
    <property type="molecule type" value="Genomic_DNA"/>
</dbReference>
<dbReference type="EMBL" id="CP002997">
    <property type="protein sequence ID" value="AEM19418.1"/>
    <property type="molecule type" value="Genomic_DNA"/>
</dbReference>
<dbReference type="RefSeq" id="WP_002965175.1">
    <property type="nucleotide sequence ID" value="NZ_KN046804.1"/>
</dbReference>
<dbReference type="SMR" id="P67004"/>
<dbReference type="KEGG" id="bms:BR2111"/>
<dbReference type="KEGG" id="bsi:BS1330_I2105"/>
<dbReference type="PATRIC" id="fig|204722.22.peg.1906"/>
<dbReference type="HOGENOM" id="CLU_076364_1_1_5"/>
<dbReference type="PhylomeDB" id="P67004"/>
<dbReference type="UniPathway" id="UPA00035">
    <property type="reaction ID" value="UER00042"/>
</dbReference>
<dbReference type="Proteomes" id="UP000007104">
    <property type="component" value="Chromosome I"/>
</dbReference>
<dbReference type="GO" id="GO:0004640">
    <property type="term" value="F:phosphoribosylanthranilate isomerase activity"/>
    <property type="evidence" value="ECO:0007669"/>
    <property type="project" value="UniProtKB-UniRule"/>
</dbReference>
<dbReference type="GO" id="GO:0000162">
    <property type="term" value="P:L-tryptophan biosynthetic process"/>
    <property type="evidence" value="ECO:0007669"/>
    <property type="project" value="UniProtKB-UniRule"/>
</dbReference>
<dbReference type="CDD" id="cd00405">
    <property type="entry name" value="PRAI"/>
    <property type="match status" value="1"/>
</dbReference>
<dbReference type="Gene3D" id="3.20.20.70">
    <property type="entry name" value="Aldolase class I"/>
    <property type="match status" value="1"/>
</dbReference>
<dbReference type="HAMAP" id="MF_00135">
    <property type="entry name" value="PRAI"/>
    <property type="match status" value="1"/>
</dbReference>
<dbReference type="InterPro" id="IPR013785">
    <property type="entry name" value="Aldolase_TIM"/>
</dbReference>
<dbReference type="InterPro" id="IPR001240">
    <property type="entry name" value="PRAI_dom"/>
</dbReference>
<dbReference type="InterPro" id="IPR011060">
    <property type="entry name" value="RibuloseP-bd_barrel"/>
</dbReference>
<dbReference type="InterPro" id="IPR044643">
    <property type="entry name" value="TrpF_fam"/>
</dbReference>
<dbReference type="NCBIfam" id="NF002295">
    <property type="entry name" value="PRK01222.1-1"/>
    <property type="match status" value="1"/>
</dbReference>
<dbReference type="PANTHER" id="PTHR42894">
    <property type="entry name" value="N-(5'-PHOSPHORIBOSYL)ANTHRANILATE ISOMERASE"/>
    <property type="match status" value="1"/>
</dbReference>
<dbReference type="PANTHER" id="PTHR42894:SF1">
    <property type="entry name" value="N-(5'-PHOSPHORIBOSYL)ANTHRANILATE ISOMERASE"/>
    <property type="match status" value="1"/>
</dbReference>
<dbReference type="Pfam" id="PF00697">
    <property type="entry name" value="PRAI"/>
    <property type="match status" value="1"/>
</dbReference>
<dbReference type="SUPFAM" id="SSF51366">
    <property type="entry name" value="Ribulose-phoshate binding barrel"/>
    <property type="match status" value="1"/>
</dbReference>
<reference key="1">
    <citation type="journal article" date="2002" name="Proc. Natl. Acad. Sci. U.S.A.">
        <title>The Brucella suis genome reveals fundamental similarities between animal and plant pathogens and symbionts.</title>
        <authorList>
            <person name="Paulsen I.T."/>
            <person name="Seshadri R."/>
            <person name="Nelson K.E."/>
            <person name="Eisen J.A."/>
            <person name="Heidelberg J.F."/>
            <person name="Read T.D."/>
            <person name="Dodson R.J."/>
            <person name="Umayam L.A."/>
            <person name="Brinkac L.M."/>
            <person name="Beanan M.J."/>
            <person name="Daugherty S.C."/>
            <person name="DeBoy R.T."/>
            <person name="Durkin A.S."/>
            <person name="Kolonay J.F."/>
            <person name="Madupu R."/>
            <person name="Nelson W.C."/>
            <person name="Ayodeji B."/>
            <person name="Kraul M."/>
            <person name="Shetty J."/>
            <person name="Malek J.A."/>
            <person name="Van Aken S.E."/>
            <person name="Riedmuller S."/>
            <person name="Tettelin H."/>
            <person name="Gill S.R."/>
            <person name="White O."/>
            <person name="Salzberg S.L."/>
            <person name="Hoover D.L."/>
            <person name="Lindler L.E."/>
            <person name="Halling S.M."/>
            <person name="Boyle S.M."/>
            <person name="Fraser C.M."/>
        </authorList>
    </citation>
    <scope>NUCLEOTIDE SEQUENCE [LARGE SCALE GENOMIC DNA]</scope>
    <source>
        <strain>1330</strain>
    </source>
</reference>
<reference key="2">
    <citation type="journal article" date="2011" name="J. Bacteriol.">
        <title>Revised genome sequence of Brucella suis 1330.</title>
        <authorList>
            <person name="Tae H."/>
            <person name="Shallom S."/>
            <person name="Settlage R."/>
            <person name="Preston D."/>
            <person name="Adams L.G."/>
            <person name="Garner H.R."/>
        </authorList>
    </citation>
    <scope>NUCLEOTIDE SEQUENCE [LARGE SCALE GENOMIC DNA]</scope>
    <source>
        <strain>1330</strain>
    </source>
</reference>
<keyword id="KW-0028">Amino-acid biosynthesis</keyword>
<keyword id="KW-0057">Aromatic amino acid biosynthesis</keyword>
<keyword id="KW-0413">Isomerase</keyword>
<keyword id="KW-0822">Tryptophan biosynthesis</keyword>
<sequence length="222" mass="23614">MALDIKICGLKTPEAVAAALDGGATHIGFIFFPKSPRHITPDAAARLRAAATGRAVAVAVTVDADDEALDEIVKTVRPDMLQLHGGETPERVRFLKERYNLPVMKAFSIREAGDLEAIAPYRGIADRFLFDAKPPKGSELPGGNGISFDWNLLAALDADIDYMLSGGLNADNIAEALLKTGAPGIDISSGVECAPGEKDVRLIENFFQAVADANAQPFARRA</sequence>
<evidence type="ECO:0000255" key="1">
    <source>
        <dbReference type="HAMAP-Rule" id="MF_00135"/>
    </source>
</evidence>
<accession>P67004</accession>
<accession>G0K959</accession>
<accession>Q8FXY3</accession>
<accession>Q8YE61</accession>
<name>TRPF_BRUSU</name>
<comment type="catalytic activity">
    <reaction evidence="1">
        <text>N-(5-phospho-beta-D-ribosyl)anthranilate = 1-(2-carboxyphenylamino)-1-deoxy-D-ribulose 5-phosphate</text>
        <dbReference type="Rhea" id="RHEA:21540"/>
        <dbReference type="ChEBI" id="CHEBI:18277"/>
        <dbReference type="ChEBI" id="CHEBI:58613"/>
        <dbReference type="EC" id="5.3.1.24"/>
    </reaction>
</comment>
<comment type="pathway">
    <text evidence="1">Amino-acid biosynthesis; L-tryptophan biosynthesis; L-tryptophan from chorismate: step 3/5.</text>
</comment>
<comment type="similarity">
    <text evidence="1">Belongs to the TrpF family.</text>
</comment>
<proteinExistence type="inferred from homology"/>
<feature type="chain" id="PRO_0000154349" description="N-(5'-phosphoribosyl)anthranilate isomerase">
    <location>
        <begin position="1"/>
        <end position="222"/>
    </location>
</feature>
<gene>
    <name evidence="1" type="primary">trpF</name>
    <name type="ordered locus">BR2111</name>
    <name type="ordered locus">BS1330_I2105</name>
</gene>
<organism>
    <name type="scientific">Brucella suis biovar 1 (strain 1330)</name>
    <dbReference type="NCBI Taxonomy" id="204722"/>
    <lineage>
        <taxon>Bacteria</taxon>
        <taxon>Pseudomonadati</taxon>
        <taxon>Pseudomonadota</taxon>
        <taxon>Alphaproteobacteria</taxon>
        <taxon>Hyphomicrobiales</taxon>
        <taxon>Brucellaceae</taxon>
        <taxon>Brucella/Ochrobactrum group</taxon>
        <taxon>Brucella</taxon>
    </lineage>
</organism>
<protein>
    <recommendedName>
        <fullName evidence="1">N-(5'-phosphoribosyl)anthranilate isomerase</fullName>
        <shortName evidence="1">PRAI</shortName>
        <ecNumber evidence="1">5.3.1.24</ecNumber>
    </recommendedName>
</protein>